<keyword id="KW-0067">ATP-binding</keyword>
<keyword id="KW-0963">Cytoplasm</keyword>
<keyword id="KW-0418">Kinase</keyword>
<keyword id="KW-0545">Nucleotide biosynthesis</keyword>
<keyword id="KW-0547">Nucleotide-binding</keyword>
<keyword id="KW-1185">Reference proteome</keyword>
<keyword id="KW-0808">Transferase</keyword>
<gene>
    <name evidence="1" type="primary">adk</name>
    <name type="ordered locus">Plav_2757</name>
</gene>
<organism>
    <name type="scientific">Parvibaculum lavamentivorans (strain DS-1 / DSM 13023 / NCIMB 13966)</name>
    <dbReference type="NCBI Taxonomy" id="402881"/>
    <lineage>
        <taxon>Bacteria</taxon>
        <taxon>Pseudomonadati</taxon>
        <taxon>Pseudomonadota</taxon>
        <taxon>Alphaproteobacteria</taxon>
        <taxon>Hyphomicrobiales</taxon>
        <taxon>Parvibaculaceae</taxon>
        <taxon>Parvibaculum</taxon>
    </lineage>
</organism>
<comment type="function">
    <text evidence="1">Catalyzes the reversible transfer of the terminal phosphate group between ATP and AMP. Plays an important role in cellular energy homeostasis and in adenine nucleotide metabolism.</text>
</comment>
<comment type="catalytic activity">
    <reaction evidence="1">
        <text>AMP + ATP = 2 ADP</text>
        <dbReference type="Rhea" id="RHEA:12973"/>
        <dbReference type="ChEBI" id="CHEBI:30616"/>
        <dbReference type="ChEBI" id="CHEBI:456215"/>
        <dbReference type="ChEBI" id="CHEBI:456216"/>
        <dbReference type="EC" id="2.7.4.3"/>
    </reaction>
</comment>
<comment type="pathway">
    <text evidence="1">Purine metabolism; AMP biosynthesis via salvage pathway; AMP from ADP: step 1/1.</text>
</comment>
<comment type="subunit">
    <text evidence="1">Monomer.</text>
</comment>
<comment type="subcellular location">
    <subcellularLocation>
        <location evidence="1">Cytoplasm</location>
    </subcellularLocation>
</comment>
<comment type="domain">
    <text evidence="1">Consists of three domains, a large central CORE domain and two small peripheral domains, NMPbind and LID, which undergo movements during catalysis. The LID domain closes over the site of phosphoryl transfer upon ATP binding. Assembling and dissambling the active center during each catalytic cycle provides an effective means to prevent ATP hydrolysis.</text>
</comment>
<comment type="similarity">
    <text evidence="1">Belongs to the adenylate kinase family.</text>
</comment>
<feature type="chain" id="PRO_1000071802" description="Adenylate kinase">
    <location>
        <begin position="1"/>
        <end position="205"/>
    </location>
</feature>
<feature type="region of interest" description="NMP" evidence="1">
    <location>
        <begin position="30"/>
        <end position="59"/>
    </location>
</feature>
<feature type="region of interest" description="LID" evidence="1">
    <location>
        <begin position="126"/>
        <end position="139"/>
    </location>
</feature>
<feature type="binding site" evidence="1">
    <location>
        <begin position="10"/>
        <end position="15"/>
    </location>
    <ligand>
        <name>ATP</name>
        <dbReference type="ChEBI" id="CHEBI:30616"/>
    </ligand>
</feature>
<feature type="binding site" evidence="1">
    <location>
        <position position="31"/>
    </location>
    <ligand>
        <name>AMP</name>
        <dbReference type="ChEBI" id="CHEBI:456215"/>
    </ligand>
</feature>
<feature type="binding site" evidence="1">
    <location>
        <position position="36"/>
    </location>
    <ligand>
        <name>AMP</name>
        <dbReference type="ChEBI" id="CHEBI:456215"/>
    </ligand>
</feature>
<feature type="binding site" evidence="1">
    <location>
        <begin position="57"/>
        <end position="59"/>
    </location>
    <ligand>
        <name>AMP</name>
        <dbReference type="ChEBI" id="CHEBI:456215"/>
    </ligand>
</feature>
<feature type="binding site" evidence="1">
    <location>
        <begin position="85"/>
        <end position="88"/>
    </location>
    <ligand>
        <name>AMP</name>
        <dbReference type="ChEBI" id="CHEBI:456215"/>
    </ligand>
</feature>
<feature type="binding site" evidence="1">
    <location>
        <position position="92"/>
    </location>
    <ligand>
        <name>AMP</name>
        <dbReference type="ChEBI" id="CHEBI:456215"/>
    </ligand>
</feature>
<feature type="binding site" evidence="1">
    <location>
        <position position="127"/>
    </location>
    <ligand>
        <name>ATP</name>
        <dbReference type="ChEBI" id="CHEBI:30616"/>
    </ligand>
</feature>
<feature type="binding site" evidence="1">
    <location>
        <position position="136"/>
    </location>
    <ligand>
        <name>AMP</name>
        <dbReference type="ChEBI" id="CHEBI:456215"/>
    </ligand>
</feature>
<feature type="binding site" evidence="1">
    <location>
        <position position="147"/>
    </location>
    <ligand>
        <name>AMP</name>
        <dbReference type="ChEBI" id="CHEBI:456215"/>
    </ligand>
</feature>
<feature type="binding site" evidence="1">
    <location>
        <position position="175"/>
    </location>
    <ligand>
        <name>ATP</name>
        <dbReference type="ChEBI" id="CHEBI:30616"/>
    </ligand>
</feature>
<proteinExistence type="inferred from homology"/>
<sequence length="205" mass="21744">MKLILLGPPGAGKGTQAKRLEEAHGLVQLSTGDMLRAAVAQGSEVGKVAEGIMARGELVPDDVVVGIIADRIEQPDAVNGYILDGFPRNVAQAEALDKMLAGKGTTLDAVVELGVDDSILLKRIETRAAETAGGPRADDNAEALAKRLKVYHEQTAPLIAYYKAKGKLRTVDGMKSMDEVTGQIETVLGISKRKGSWLSRLTGKK</sequence>
<protein>
    <recommendedName>
        <fullName evidence="1">Adenylate kinase</fullName>
        <shortName evidence="1">AK</shortName>
        <ecNumber evidence="1">2.7.4.3</ecNumber>
    </recommendedName>
    <alternativeName>
        <fullName evidence="1">ATP-AMP transphosphorylase</fullName>
    </alternativeName>
    <alternativeName>
        <fullName evidence="1">ATP:AMP phosphotransferase</fullName>
    </alternativeName>
    <alternativeName>
        <fullName evidence="1">Adenylate monophosphate kinase</fullName>
    </alternativeName>
</protein>
<dbReference type="EC" id="2.7.4.3" evidence="1"/>
<dbReference type="EMBL" id="CP000774">
    <property type="protein sequence ID" value="ABS64365.1"/>
    <property type="molecule type" value="Genomic_DNA"/>
</dbReference>
<dbReference type="RefSeq" id="WP_012111679.1">
    <property type="nucleotide sequence ID" value="NC_009719.1"/>
</dbReference>
<dbReference type="SMR" id="A7HWT2"/>
<dbReference type="STRING" id="402881.Plav_2757"/>
<dbReference type="KEGG" id="pla:Plav_2757"/>
<dbReference type="eggNOG" id="COG0563">
    <property type="taxonomic scope" value="Bacteria"/>
</dbReference>
<dbReference type="HOGENOM" id="CLU_032354_1_2_5"/>
<dbReference type="OrthoDB" id="9805030at2"/>
<dbReference type="UniPathway" id="UPA00588">
    <property type="reaction ID" value="UER00649"/>
</dbReference>
<dbReference type="Proteomes" id="UP000006377">
    <property type="component" value="Chromosome"/>
</dbReference>
<dbReference type="GO" id="GO:0005737">
    <property type="term" value="C:cytoplasm"/>
    <property type="evidence" value="ECO:0007669"/>
    <property type="project" value="UniProtKB-SubCell"/>
</dbReference>
<dbReference type="GO" id="GO:0004017">
    <property type="term" value="F:adenylate kinase activity"/>
    <property type="evidence" value="ECO:0007669"/>
    <property type="project" value="UniProtKB-UniRule"/>
</dbReference>
<dbReference type="GO" id="GO:0005524">
    <property type="term" value="F:ATP binding"/>
    <property type="evidence" value="ECO:0007669"/>
    <property type="project" value="UniProtKB-UniRule"/>
</dbReference>
<dbReference type="GO" id="GO:0044209">
    <property type="term" value="P:AMP salvage"/>
    <property type="evidence" value="ECO:0007669"/>
    <property type="project" value="UniProtKB-UniRule"/>
</dbReference>
<dbReference type="CDD" id="cd01428">
    <property type="entry name" value="ADK"/>
    <property type="match status" value="1"/>
</dbReference>
<dbReference type="Gene3D" id="3.40.50.300">
    <property type="entry name" value="P-loop containing nucleotide triphosphate hydrolases"/>
    <property type="match status" value="1"/>
</dbReference>
<dbReference type="HAMAP" id="MF_00235">
    <property type="entry name" value="Adenylate_kinase_Adk"/>
    <property type="match status" value="1"/>
</dbReference>
<dbReference type="InterPro" id="IPR000850">
    <property type="entry name" value="Adenylat/UMP-CMP_kin"/>
</dbReference>
<dbReference type="InterPro" id="IPR033690">
    <property type="entry name" value="Adenylat_kinase_CS"/>
</dbReference>
<dbReference type="InterPro" id="IPR027417">
    <property type="entry name" value="P-loop_NTPase"/>
</dbReference>
<dbReference type="NCBIfam" id="NF001381">
    <property type="entry name" value="PRK00279.1-3"/>
    <property type="match status" value="1"/>
</dbReference>
<dbReference type="NCBIfam" id="NF011100">
    <property type="entry name" value="PRK14527.1"/>
    <property type="match status" value="1"/>
</dbReference>
<dbReference type="NCBIfam" id="NF011104">
    <property type="entry name" value="PRK14531.1"/>
    <property type="match status" value="1"/>
</dbReference>
<dbReference type="NCBIfam" id="NF011105">
    <property type="entry name" value="PRK14532.1"/>
    <property type="match status" value="1"/>
</dbReference>
<dbReference type="PANTHER" id="PTHR23359">
    <property type="entry name" value="NUCLEOTIDE KINASE"/>
    <property type="match status" value="1"/>
</dbReference>
<dbReference type="Pfam" id="PF00406">
    <property type="entry name" value="ADK"/>
    <property type="match status" value="1"/>
</dbReference>
<dbReference type="PRINTS" id="PR00094">
    <property type="entry name" value="ADENYLTKNASE"/>
</dbReference>
<dbReference type="SUPFAM" id="SSF52540">
    <property type="entry name" value="P-loop containing nucleoside triphosphate hydrolases"/>
    <property type="match status" value="1"/>
</dbReference>
<dbReference type="PROSITE" id="PS00113">
    <property type="entry name" value="ADENYLATE_KINASE"/>
    <property type="match status" value="1"/>
</dbReference>
<name>KAD_PARL1</name>
<accession>A7HWT2</accession>
<evidence type="ECO:0000255" key="1">
    <source>
        <dbReference type="HAMAP-Rule" id="MF_00235"/>
    </source>
</evidence>
<reference key="1">
    <citation type="journal article" date="2011" name="Stand. Genomic Sci.">
        <title>Complete genome sequence of Parvibaculum lavamentivorans type strain (DS-1(T)).</title>
        <authorList>
            <person name="Schleheck D."/>
            <person name="Weiss M."/>
            <person name="Pitluck S."/>
            <person name="Bruce D."/>
            <person name="Land M.L."/>
            <person name="Han S."/>
            <person name="Saunders E."/>
            <person name="Tapia R."/>
            <person name="Detter C."/>
            <person name="Brettin T."/>
            <person name="Han J."/>
            <person name="Woyke T."/>
            <person name="Goodwin L."/>
            <person name="Pennacchio L."/>
            <person name="Nolan M."/>
            <person name="Cook A.M."/>
            <person name="Kjelleberg S."/>
            <person name="Thomas T."/>
        </authorList>
    </citation>
    <scope>NUCLEOTIDE SEQUENCE [LARGE SCALE GENOMIC DNA]</scope>
    <source>
        <strain>DS-1 / DSM 13023 / NCIMB 13966</strain>
    </source>
</reference>